<protein>
    <recommendedName>
        <fullName evidence="1">Recombination protein RecR</fullName>
    </recommendedName>
</protein>
<name>RECR_ALLAM</name>
<sequence length="201" mass="21346">MAKRVTGPEIEKLIQLLAKVPGLGPRSARRAALHLIKKREQLMGPLALAMGEAHAKVKICSCCGNVDTIDPCTVCTDERRDQSMIIVVEDVSDLWALERAGAMNVAYHVLGGTLSPLDGVGPDDLNIKGLIDRVAKGGVREIIIAVNATVEGQTTAHYITDHLAGLGVKTTRLAHGVPVGGELDYLDEGTLSAALRARTLI</sequence>
<keyword id="KW-0227">DNA damage</keyword>
<keyword id="KW-0233">DNA recombination</keyword>
<keyword id="KW-0234">DNA repair</keyword>
<keyword id="KW-0479">Metal-binding</keyword>
<keyword id="KW-1185">Reference proteome</keyword>
<keyword id="KW-0862">Zinc</keyword>
<keyword id="KW-0863">Zinc-finger</keyword>
<accession>B9JYJ6</accession>
<evidence type="ECO:0000255" key="1">
    <source>
        <dbReference type="HAMAP-Rule" id="MF_00017"/>
    </source>
</evidence>
<organism>
    <name type="scientific">Allorhizobium ampelinum (strain ATCC BAA-846 / DSM 112012 / S4)</name>
    <name type="common">Agrobacterium vitis (strain S4)</name>
    <dbReference type="NCBI Taxonomy" id="311402"/>
    <lineage>
        <taxon>Bacteria</taxon>
        <taxon>Pseudomonadati</taxon>
        <taxon>Pseudomonadota</taxon>
        <taxon>Alphaproteobacteria</taxon>
        <taxon>Hyphomicrobiales</taxon>
        <taxon>Rhizobiaceae</taxon>
        <taxon>Rhizobium/Agrobacterium group</taxon>
        <taxon>Allorhizobium</taxon>
        <taxon>Allorhizobium ampelinum</taxon>
    </lineage>
</organism>
<dbReference type="EMBL" id="CP000633">
    <property type="protein sequence ID" value="ACM35092.1"/>
    <property type="molecule type" value="Genomic_DNA"/>
</dbReference>
<dbReference type="RefSeq" id="WP_012654622.1">
    <property type="nucleotide sequence ID" value="NC_011989.1"/>
</dbReference>
<dbReference type="SMR" id="B9JYJ6"/>
<dbReference type="STRING" id="311402.Avi_0156"/>
<dbReference type="GeneID" id="60681076"/>
<dbReference type="KEGG" id="avi:Avi_0156"/>
<dbReference type="eggNOG" id="COG0353">
    <property type="taxonomic scope" value="Bacteria"/>
</dbReference>
<dbReference type="HOGENOM" id="CLU_060739_1_1_5"/>
<dbReference type="Proteomes" id="UP000001596">
    <property type="component" value="Chromosome 1"/>
</dbReference>
<dbReference type="GO" id="GO:0003677">
    <property type="term" value="F:DNA binding"/>
    <property type="evidence" value="ECO:0007669"/>
    <property type="project" value="UniProtKB-UniRule"/>
</dbReference>
<dbReference type="GO" id="GO:0008270">
    <property type="term" value="F:zinc ion binding"/>
    <property type="evidence" value="ECO:0007669"/>
    <property type="project" value="UniProtKB-KW"/>
</dbReference>
<dbReference type="GO" id="GO:0006310">
    <property type="term" value="P:DNA recombination"/>
    <property type="evidence" value="ECO:0007669"/>
    <property type="project" value="UniProtKB-UniRule"/>
</dbReference>
<dbReference type="GO" id="GO:0006281">
    <property type="term" value="P:DNA repair"/>
    <property type="evidence" value="ECO:0007669"/>
    <property type="project" value="UniProtKB-UniRule"/>
</dbReference>
<dbReference type="CDD" id="cd01025">
    <property type="entry name" value="TOPRIM_recR"/>
    <property type="match status" value="1"/>
</dbReference>
<dbReference type="Gene3D" id="3.40.1360.10">
    <property type="match status" value="1"/>
</dbReference>
<dbReference type="Gene3D" id="6.10.250.240">
    <property type="match status" value="1"/>
</dbReference>
<dbReference type="Gene3D" id="1.10.8.420">
    <property type="entry name" value="RecR Domain 1"/>
    <property type="match status" value="1"/>
</dbReference>
<dbReference type="HAMAP" id="MF_00017">
    <property type="entry name" value="RecR"/>
    <property type="match status" value="1"/>
</dbReference>
<dbReference type="InterPro" id="IPR000093">
    <property type="entry name" value="DNA_Rcmb_RecR"/>
</dbReference>
<dbReference type="InterPro" id="IPR023627">
    <property type="entry name" value="Rcmb_RecR"/>
</dbReference>
<dbReference type="InterPro" id="IPR015967">
    <property type="entry name" value="Rcmb_RecR_Znf"/>
</dbReference>
<dbReference type="InterPro" id="IPR006171">
    <property type="entry name" value="TOPRIM_dom"/>
</dbReference>
<dbReference type="InterPro" id="IPR034137">
    <property type="entry name" value="TOPRIM_RecR"/>
</dbReference>
<dbReference type="NCBIfam" id="TIGR00615">
    <property type="entry name" value="recR"/>
    <property type="match status" value="1"/>
</dbReference>
<dbReference type="PANTHER" id="PTHR30446">
    <property type="entry name" value="RECOMBINATION PROTEIN RECR"/>
    <property type="match status" value="1"/>
</dbReference>
<dbReference type="PANTHER" id="PTHR30446:SF0">
    <property type="entry name" value="RECOMBINATION PROTEIN RECR"/>
    <property type="match status" value="1"/>
</dbReference>
<dbReference type="Pfam" id="PF21175">
    <property type="entry name" value="RecR_C"/>
    <property type="match status" value="1"/>
</dbReference>
<dbReference type="Pfam" id="PF21176">
    <property type="entry name" value="RecR_HhH"/>
    <property type="match status" value="1"/>
</dbReference>
<dbReference type="Pfam" id="PF13662">
    <property type="entry name" value="Toprim_4"/>
    <property type="match status" value="1"/>
</dbReference>
<dbReference type="SMART" id="SM00493">
    <property type="entry name" value="TOPRIM"/>
    <property type="match status" value="1"/>
</dbReference>
<dbReference type="SUPFAM" id="SSF111304">
    <property type="entry name" value="Recombination protein RecR"/>
    <property type="match status" value="1"/>
</dbReference>
<dbReference type="PROSITE" id="PS01300">
    <property type="entry name" value="RECR"/>
    <property type="match status" value="1"/>
</dbReference>
<dbReference type="PROSITE" id="PS50880">
    <property type="entry name" value="TOPRIM"/>
    <property type="match status" value="1"/>
</dbReference>
<comment type="function">
    <text evidence="1">May play a role in DNA repair. It seems to be involved in an RecBC-independent recombinational process of DNA repair. It may act with RecF and RecO.</text>
</comment>
<comment type="similarity">
    <text evidence="1">Belongs to the RecR family.</text>
</comment>
<gene>
    <name evidence="1" type="primary">recR</name>
    <name type="ordered locus">Avi_0156</name>
</gene>
<feature type="chain" id="PRO_1000116670" description="Recombination protein RecR">
    <location>
        <begin position="1"/>
        <end position="201"/>
    </location>
</feature>
<feature type="domain" description="Toprim" evidence="1">
    <location>
        <begin position="83"/>
        <end position="178"/>
    </location>
</feature>
<feature type="zinc finger region" description="C4-type" evidence="1">
    <location>
        <begin position="60"/>
        <end position="75"/>
    </location>
</feature>
<proteinExistence type="inferred from homology"/>
<reference key="1">
    <citation type="journal article" date="2009" name="J. Bacteriol.">
        <title>Genome sequences of three Agrobacterium biovars help elucidate the evolution of multichromosome genomes in bacteria.</title>
        <authorList>
            <person name="Slater S.C."/>
            <person name="Goldman B.S."/>
            <person name="Goodner B."/>
            <person name="Setubal J.C."/>
            <person name="Farrand S.K."/>
            <person name="Nester E.W."/>
            <person name="Burr T.J."/>
            <person name="Banta L."/>
            <person name="Dickerman A.W."/>
            <person name="Paulsen I."/>
            <person name="Otten L."/>
            <person name="Suen G."/>
            <person name="Welch R."/>
            <person name="Almeida N.F."/>
            <person name="Arnold F."/>
            <person name="Burton O.T."/>
            <person name="Du Z."/>
            <person name="Ewing A."/>
            <person name="Godsy E."/>
            <person name="Heisel S."/>
            <person name="Houmiel K.L."/>
            <person name="Jhaveri J."/>
            <person name="Lu J."/>
            <person name="Miller N.M."/>
            <person name="Norton S."/>
            <person name="Chen Q."/>
            <person name="Phoolcharoen W."/>
            <person name="Ohlin V."/>
            <person name="Ondrusek D."/>
            <person name="Pride N."/>
            <person name="Stricklin S.L."/>
            <person name="Sun J."/>
            <person name="Wheeler C."/>
            <person name="Wilson L."/>
            <person name="Zhu H."/>
            <person name="Wood D.W."/>
        </authorList>
    </citation>
    <scope>NUCLEOTIDE SEQUENCE [LARGE SCALE GENOMIC DNA]</scope>
    <source>
        <strain>ATCC BAA-846 / DSM 112012 / S4</strain>
    </source>
</reference>